<dbReference type="EC" id="2.7.1.48" evidence="1"/>
<dbReference type="EMBL" id="AM286415">
    <property type="protein sequence ID" value="CAL12816.1"/>
    <property type="molecule type" value="Genomic_DNA"/>
</dbReference>
<dbReference type="RefSeq" id="WP_005162352.1">
    <property type="nucleotide sequence ID" value="NC_008800.1"/>
</dbReference>
<dbReference type="RefSeq" id="YP_001006973.1">
    <property type="nucleotide sequence ID" value="NC_008800.1"/>
</dbReference>
<dbReference type="SMR" id="A1JTX4"/>
<dbReference type="GeneID" id="93970407"/>
<dbReference type="KEGG" id="yen:YE2783"/>
<dbReference type="PATRIC" id="fig|393305.7.peg.2957"/>
<dbReference type="eggNOG" id="COG0572">
    <property type="taxonomic scope" value="Bacteria"/>
</dbReference>
<dbReference type="HOGENOM" id="CLU_021278_1_2_6"/>
<dbReference type="OrthoDB" id="9777642at2"/>
<dbReference type="UniPathway" id="UPA00574">
    <property type="reaction ID" value="UER00637"/>
</dbReference>
<dbReference type="UniPathway" id="UPA00579">
    <property type="reaction ID" value="UER00640"/>
</dbReference>
<dbReference type="Proteomes" id="UP000000642">
    <property type="component" value="Chromosome"/>
</dbReference>
<dbReference type="GO" id="GO:0005737">
    <property type="term" value="C:cytoplasm"/>
    <property type="evidence" value="ECO:0007669"/>
    <property type="project" value="UniProtKB-SubCell"/>
</dbReference>
<dbReference type="GO" id="GO:0005524">
    <property type="term" value="F:ATP binding"/>
    <property type="evidence" value="ECO:0007669"/>
    <property type="project" value="UniProtKB-UniRule"/>
</dbReference>
<dbReference type="GO" id="GO:0043771">
    <property type="term" value="F:cytidine kinase activity"/>
    <property type="evidence" value="ECO:0007669"/>
    <property type="project" value="RHEA"/>
</dbReference>
<dbReference type="GO" id="GO:0004849">
    <property type="term" value="F:uridine kinase activity"/>
    <property type="evidence" value="ECO:0007669"/>
    <property type="project" value="UniProtKB-UniRule"/>
</dbReference>
<dbReference type="GO" id="GO:0044211">
    <property type="term" value="P:CTP salvage"/>
    <property type="evidence" value="ECO:0007669"/>
    <property type="project" value="UniProtKB-UniRule"/>
</dbReference>
<dbReference type="GO" id="GO:0044206">
    <property type="term" value="P:UMP salvage"/>
    <property type="evidence" value="ECO:0007669"/>
    <property type="project" value="UniProtKB-UniRule"/>
</dbReference>
<dbReference type="CDD" id="cd02023">
    <property type="entry name" value="UMPK"/>
    <property type="match status" value="1"/>
</dbReference>
<dbReference type="FunFam" id="3.40.50.300:FF:000252">
    <property type="entry name" value="Uridine kinase"/>
    <property type="match status" value="1"/>
</dbReference>
<dbReference type="Gene3D" id="3.40.50.300">
    <property type="entry name" value="P-loop containing nucleotide triphosphate hydrolases"/>
    <property type="match status" value="1"/>
</dbReference>
<dbReference type="HAMAP" id="MF_00551">
    <property type="entry name" value="Uridine_kinase"/>
    <property type="match status" value="1"/>
</dbReference>
<dbReference type="InterPro" id="IPR027417">
    <property type="entry name" value="P-loop_NTPase"/>
</dbReference>
<dbReference type="InterPro" id="IPR006083">
    <property type="entry name" value="PRK/URK"/>
</dbReference>
<dbReference type="InterPro" id="IPR026008">
    <property type="entry name" value="Uridine_kinase"/>
</dbReference>
<dbReference type="InterPro" id="IPR000764">
    <property type="entry name" value="Uridine_kinase-like"/>
</dbReference>
<dbReference type="NCBIfam" id="NF004018">
    <property type="entry name" value="PRK05480.1"/>
    <property type="match status" value="1"/>
</dbReference>
<dbReference type="NCBIfam" id="TIGR00235">
    <property type="entry name" value="udk"/>
    <property type="match status" value="1"/>
</dbReference>
<dbReference type="PANTHER" id="PTHR10285">
    <property type="entry name" value="URIDINE KINASE"/>
    <property type="match status" value="1"/>
</dbReference>
<dbReference type="Pfam" id="PF00485">
    <property type="entry name" value="PRK"/>
    <property type="match status" value="1"/>
</dbReference>
<dbReference type="PRINTS" id="PR00988">
    <property type="entry name" value="URIDINKINASE"/>
</dbReference>
<dbReference type="SUPFAM" id="SSF52540">
    <property type="entry name" value="P-loop containing nucleoside triphosphate hydrolases"/>
    <property type="match status" value="1"/>
</dbReference>
<evidence type="ECO:0000255" key="1">
    <source>
        <dbReference type="HAMAP-Rule" id="MF_00551"/>
    </source>
</evidence>
<proteinExistence type="inferred from homology"/>
<comment type="catalytic activity">
    <reaction evidence="1">
        <text>uridine + ATP = UMP + ADP + H(+)</text>
        <dbReference type="Rhea" id="RHEA:16825"/>
        <dbReference type="ChEBI" id="CHEBI:15378"/>
        <dbReference type="ChEBI" id="CHEBI:16704"/>
        <dbReference type="ChEBI" id="CHEBI:30616"/>
        <dbReference type="ChEBI" id="CHEBI:57865"/>
        <dbReference type="ChEBI" id="CHEBI:456216"/>
        <dbReference type="EC" id="2.7.1.48"/>
    </reaction>
</comment>
<comment type="catalytic activity">
    <reaction evidence="1">
        <text>cytidine + ATP = CMP + ADP + H(+)</text>
        <dbReference type="Rhea" id="RHEA:24674"/>
        <dbReference type="ChEBI" id="CHEBI:15378"/>
        <dbReference type="ChEBI" id="CHEBI:17562"/>
        <dbReference type="ChEBI" id="CHEBI:30616"/>
        <dbReference type="ChEBI" id="CHEBI:60377"/>
        <dbReference type="ChEBI" id="CHEBI:456216"/>
        <dbReference type="EC" id="2.7.1.48"/>
    </reaction>
</comment>
<comment type="pathway">
    <text evidence="1">Pyrimidine metabolism; CTP biosynthesis via salvage pathway; CTP from cytidine: step 1/3.</text>
</comment>
<comment type="pathway">
    <text evidence="1">Pyrimidine metabolism; UMP biosynthesis via salvage pathway; UMP from uridine: step 1/1.</text>
</comment>
<comment type="subcellular location">
    <subcellularLocation>
        <location evidence="1">Cytoplasm</location>
    </subcellularLocation>
</comment>
<comment type="similarity">
    <text evidence="1">Belongs to the uridine kinase family.</text>
</comment>
<gene>
    <name evidence="1" type="primary">udk</name>
    <name type="ordered locus">YE2783</name>
</gene>
<feature type="chain" id="PRO_1000017915" description="Uridine kinase">
    <location>
        <begin position="1"/>
        <end position="213"/>
    </location>
</feature>
<feature type="binding site" evidence="1">
    <location>
        <begin position="15"/>
        <end position="22"/>
    </location>
    <ligand>
        <name>ATP</name>
        <dbReference type="ChEBI" id="CHEBI:30616"/>
    </ligand>
</feature>
<accession>A1JTX4</accession>
<sequence>MTDKAHQCVIIGIAGASASGKSLIASTLYRELREQVGDQHIGVIPEDGYYKDQSHLSMEERVKTNYDHPSAMDHNLLLEHLQSLKAGKPIELPLYSYTEHTRKKETVHLEPKKVIILEGILLLTDIRLRQEMNFSIFVDTPLDICLMRRMKRDVNERGRSMDSVMAQYQKTVRPMFLQFIEPSKQYADIIVPRGGKNRIAIDILKAKISQFFE</sequence>
<reference key="1">
    <citation type="journal article" date="2006" name="PLoS Genet.">
        <title>The complete genome sequence and comparative genome analysis of the high pathogenicity Yersinia enterocolitica strain 8081.</title>
        <authorList>
            <person name="Thomson N.R."/>
            <person name="Howard S."/>
            <person name="Wren B.W."/>
            <person name="Holden M.T.G."/>
            <person name="Crossman L."/>
            <person name="Challis G.L."/>
            <person name="Churcher C."/>
            <person name="Mungall K."/>
            <person name="Brooks K."/>
            <person name="Chillingworth T."/>
            <person name="Feltwell T."/>
            <person name="Abdellah Z."/>
            <person name="Hauser H."/>
            <person name="Jagels K."/>
            <person name="Maddison M."/>
            <person name="Moule S."/>
            <person name="Sanders M."/>
            <person name="Whitehead S."/>
            <person name="Quail M.A."/>
            <person name="Dougan G."/>
            <person name="Parkhill J."/>
            <person name="Prentice M.B."/>
        </authorList>
    </citation>
    <scope>NUCLEOTIDE SEQUENCE [LARGE SCALE GENOMIC DNA]</scope>
    <source>
        <strain>NCTC 13174 / 8081</strain>
    </source>
</reference>
<protein>
    <recommendedName>
        <fullName evidence="1">Uridine kinase</fullName>
        <ecNumber evidence="1">2.7.1.48</ecNumber>
    </recommendedName>
    <alternativeName>
        <fullName evidence="1">Cytidine monophosphokinase</fullName>
    </alternativeName>
    <alternativeName>
        <fullName evidence="1">Uridine monophosphokinase</fullName>
    </alternativeName>
</protein>
<organism>
    <name type="scientific">Yersinia enterocolitica serotype O:8 / biotype 1B (strain NCTC 13174 / 8081)</name>
    <dbReference type="NCBI Taxonomy" id="393305"/>
    <lineage>
        <taxon>Bacteria</taxon>
        <taxon>Pseudomonadati</taxon>
        <taxon>Pseudomonadota</taxon>
        <taxon>Gammaproteobacteria</taxon>
        <taxon>Enterobacterales</taxon>
        <taxon>Yersiniaceae</taxon>
        <taxon>Yersinia</taxon>
    </lineage>
</organism>
<name>URK_YERE8</name>
<keyword id="KW-0067">ATP-binding</keyword>
<keyword id="KW-0963">Cytoplasm</keyword>
<keyword id="KW-0418">Kinase</keyword>
<keyword id="KW-0547">Nucleotide-binding</keyword>
<keyword id="KW-0808">Transferase</keyword>